<accession>Q5JI21</accession>
<protein>
    <recommendedName>
        <fullName evidence="1">2,3-bisphosphoglycerate-independent phosphoglycerate mutase</fullName>
        <shortName evidence="1">BPG-independent PGAM</shortName>
        <shortName evidence="1">Phosphoglyceromutase</shortName>
        <shortName evidence="1">aPGAM</shortName>
        <ecNumber evidence="1">5.4.2.12</ecNumber>
    </recommendedName>
</protein>
<organism>
    <name type="scientific">Thermococcus kodakarensis (strain ATCC BAA-918 / JCM 12380 / KOD1)</name>
    <name type="common">Pyrococcus kodakaraensis (strain KOD1)</name>
    <dbReference type="NCBI Taxonomy" id="69014"/>
    <lineage>
        <taxon>Archaea</taxon>
        <taxon>Methanobacteriati</taxon>
        <taxon>Methanobacteriota</taxon>
        <taxon>Thermococci</taxon>
        <taxon>Thermococcales</taxon>
        <taxon>Thermococcaceae</taxon>
        <taxon>Thermococcus</taxon>
    </lineage>
</organism>
<proteinExistence type="inferred from homology"/>
<keyword id="KW-0324">Glycolysis</keyword>
<keyword id="KW-0413">Isomerase</keyword>
<keyword id="KW-1185">Reference proteome</keyword>
<comment type="function">
    <text evidence="1">Catalyzes the interconversion of 2-phosphoglycerate and 3-phosphoglycerate.</text>
</comment>
<comment type="catalytic activity">
    <reaction evidence="1">
        <text>(2R)-2-phosphoglycerate = (2R)-3-phosphoglycerate</text>
        <dbReference type="Rhea" id="RHEA:15901"/>
        <dbReference type="ChEBI" id="CHEBI:58272"/>
        <dbReference type="ChEBI" id="CHEBI:58289"/>
        <dbReference type="EC" id="5.4.2.12"/>
    </reaction>
</comment>
<comment type="pathway">
    <text evidence="1">Carbohydrate degradation; glycolysis; pyruvate from D-glyceraldehyde 3-phosphate: step 3/5.</text>
</comment>
<comment type="similarity">
    <text evidence="1">Belongs to the BPG-independent phosphoglycerate mutase family. A-PGAM subfamily.</text>
</comment>
<dbReference type="EC" id="5.4.2.12" evidence="1"/>
<dbReference type="EMBL" id="AP006878">
    <property type="protein sequence ID" value="BAD85055.1"/>
    <property type="molecule type" value="Genomic_DNA"/>
</dbReference>
<dbReference type="RefSeq" id="WP_011249817.1">
    <property type="nucleotide sequence ID" value="NC_006624.1"/>
</dbReference>
<dbReference type="SMR" id="Q5JI21"/>
<dbReference type="FunCoup" id="Q5JI21">
    <property type="interactions" value="102"/>
</dbReference>
<dbReference type="IntAct" id="Q5JI21">
    <property type="interactions" value="1"/>
</dbReference>
<dbReference type="MINT" id="Q5JI21"/>
<dbReference type="STRING" id="69014.TK0866"/>
<dbReference type="EnsemblBacteria" id="BAD85055">
    <property type="protein sequence ID" value="BAD85055"/>
    <property type="gene ID" value="TK0866"/>
</dbReference>
<dbReference type="GeneID" id="78447381"/>
<dbReference type="KEGG" id="tko:TK0866"/>
<dbReference type="PATRIC" id="fig|69014.16.peg.845"/>
<dbReference type="eggNOG" id="arCOG01696">
    <property type="taxonomic scope" value="Archaea"/>
</dbReference>
<dbReference type="HOGENOM" id="CLU_034906_2_0_2"/>
<dbReference type="InParanoid" id="Q5JI21"/>
<dbReference type="OrthoDB" id="52918at2157"/>
<dbReference type="PhylomeDB" id="Q5JI21"/>
<dbReference type="UniPathway" id="UPA00109">
    <property type="reaction ID" value="UER00186"/>
</dbReference>
<dbReference type="Proteomes" id="UP000000536">
    <property type="component" value="Chromosome"/>
</dbReference>
<dbReference type="GO" id="GO:0046872">
    <property type="term" value="F:metal ion binding"/>
    <property type="evidence" value="ECO:0007669"/>
    <property type="project" value="InterPro"/>
</dbReference>
<dbReference type="GO" id="GO:0004619">
    <property type="term" value="F:phosphoglycerate mutase activity"/>
    <property type="evidence" value="ECO:0007669"/>
    <property type="project" value="UniProtKB-EC"/>
</dbReference>
<dbReference type="GO" id="GO:0006096">
    <property type="term" value="P:glycolytic process"/>
    <property type="evidence" value="ECO:0007669"/>
    <property type="project" value="UniProtKB-UniRule"/>
</dbReference>
<dbReference type="CDD" id="cd16011">
    <property type="entry name" value="iPGM_like"/>
    <property type="match status" value="1"/>
</dbReference>
<dbReference type="Gene3D" id="3.40.720.10">
    <property type="entry name" value="Alkaline Phosphatase, subunit A"/>
    <property type="match status" value="1"/>
</dbReference>
<dbReference type="Gene3D" id="3.30.70.2130">
    <property type="entry name" value="Metalloenzyme domain"/>
    <property type="match status" value="1"/>
</dbReference>
<dbReference type="HAMAP" id="MF_01402_A">
    <property type="entry name" value="ApgM_A"/>
    <property type="match status" value="1"/>
</dbReference>
<dbReference type="InterPro" id="IPR017850">
    <property type="entry name" value="Alkaline_phosphatase_core_sf"/>
</dbReference>
<dbReference type="InterPro" id="IPR023665">
    <property type="entry name" value="ApgAM_prokaryotes"/>
</dbReference>
<dbReference type="InterPro" id="IPR006124">
    <property type="entry name" value="Metalloenzyme"/>
</dbReference>
<dbReference type="InterPro" id="IPR004456">
    <property type="entry name" value="Pglycerate_mutase_ApgM"/>
</dbReference>
<dbReference type="InterPro" id="IPR042253">
    <property type="entry name" value="Pglycerate_mutase_ApgM_sf"/>
</dbReference>
<dbReference type="NCBIfam" id="TIGR00306">
    <property type="entry name" value="apgM"/>
    <property type="match status" value="1"/>
</dbReference>
<dbReference type="NCBIfam" id="NF003104">
    <property type="entry name" value="PRK04024.1"/>
    <property type="match status" value="1"/>
</dbReference>
<dbReference type="PANTHER" id="PTHR31209">
    <property type="entry name" value="COFACTOR-INDEPENDENT PHOSPHOGLYCERATE MUTASE"/>
    <property type="match status" value="1"/>
</dbReference>
<dbReference type="PANTHER" id="PTHR31209:SF0">
    <property type="entry name" value="METALLOENZYME DOMAIN-CONTAINING PROTEIN"/>
    <property type="match status" value="1"/>
</dbReference>
<dbReference type="Pfam" id="PF01676">
    <property type="entry name" value="Metalloenzyme"/>
    <property type="match status" value="1"/>
</dbReference>
<dbReference type="Pfam" id="PF10143">
    <property type="entry name" value="PhosphMutase"/>
    <property type="match status" value="1"/>
</dbReference>
<dbReference type="PIRSF" id="PIRSF006392">
    <property type="entry name" value="IPGAM_arch"/>
    <property type="match status" value="1"/>
</dbReference>
<dbReference type="SUPFAM" id="SSF53649">
    <property type="entry name" value="Alkaline phosphatase-like"/>
    <property type="match status" value="1"/>
</dbReference>
<gene>
    <name evidence="1" type="primary">apgM</name>
    <name type="ordered locus">TK0866</name>
</gene>
<feature type="chain" id="PRO_0000138146" description="2,3-bisphosphoglycerate-independent phosphoglycerate mutase">
    <location>
        <begin position="1"/>
        <end position="411"/>
    </location>
</feature>
<sequence length="411" mass="45379">MKKRKGLLIILDGLGDRPIKEFGGKTPLEYANTPNMDRLAKMGILGQQDPIKPGQPAGSDTAHLSIFGYDPYKVYRGRGFLEALGVGLDLNEDDLAFRVNFATIENGIITDRRAGRISTEEAHELAKAVQENVKLPVDFIFVGATGHRAVLVLRGMAKGYRVGENDPHEAGKPPQEFTWEDEESKKVAEILEEFVQKAHEVLDKHPINEKRRKEGKPPANYLLIRGAGTYPDIPMKFTEQWKVKAGAVIAVSLVKGVARAIGFDVYTPEGATGEYNTDVMAKAKKTVELLKDYDFVFLHFKPTDAAGHDNNPKLKAEMIEKADRMIGYILEHIDLEDVVIAITGDHSTPCEVMNHSGDPVPLLIAGGGVRPDHTESFGERECMRGGIGRIKGHDIVPIMMDLMNRSEKFGA</sequence>
<name>APGM_THEKO</name>
<evidence type="ECO:0000255" key="1">
    <source>
        <dbReference type="HAMAP-Rule" id="MF_01402"/>
    </source>
</evidence>
<reference key="1">
    <citation type="journal article" date="2005" name="Genome Res.">
        <title>Complete genome sequence of the hyperthermophilic archaeon Thermococcus kodakaraensis KOD1 and comparison with Pyrococcus genomes.</title>
        <authorList>
            <person name="Fukui T."/>
            <person name="Atomi H."/>
            <person name="Kanai T."/>
            <person name="Matsumi R."/>
            <person name="Fujiwara S."/>
            <person name="Imanaka T."/>
        </authorList>
    </citation>
    <scope>NUCLEOTIDE SEQUENCE [LARGE SCALE GENOMIC DNA]</scope>
    <source>
        <strain>ATCC BAA-918 / JCM 12380 / KOD1</strain>
    </source>
</reference>